<gene>
    <name evidence="1" type="primary">apaG</name>
    <name type="ordered locus">Mrad2831_2312</name>
</gene>
<sequence>MYKAETRGISVTVQSRFVEEESSPTESRYFFAYTVEIVNNGSEQVQLRSRHWRIIDGHGACQEVRGTGVVGKQPVLEPGESFCYTSGCPLNTPDGLMAGSYTMATVAGESFEAEIPAFSLDSPHVRRSLH</sequence>
<organism>
    <name type="scientific">Methylobacterium radiotolerans (strain ATCC 27329 / DSM 1819 / JCM 2831 / NBRC 15690 / NCIMB 10815 / 0-1)</name>
    <dbReference type="NCBI Taxonomy" id="426355"/>
    <lineage>
        <taxon>Bacteria</taxon>
        <taxon>Pseudomonadati</taxon>
        <taxon>Pseudomonadota</taxon>
        <taxon>Alphaproteobacteria</taxon>
        <taxon>Hyphomicrobiales</taxon>
        <taxon>Methylobacteriaceae</taxon>
        <taxon>Methylobacterium</taxon>
    </lineage>
</organism>
<reference key="1">
    <citation type="submission" date="2008-03" db="EMBL/GenBank/DDBJ databases">
        <title>Complete sequence of chromosome of Methylobacterium radiotolerans JCM 2831.</title>
        <authorList>
            <consortium name="US DOE Joint Genome Institute"/>
            <person name="Copeland A."/>
            <person name="Lucas S."/>
            <person name="Lapidus A."/>
            <person name="Glavina del Rio T."/>
            <person name="Dalin E."/>
            <person name="Tice H."/>
            <person name="Bruce D."/>
            <person name="Goodwin L."/>
            <person name="Pitluck S."/>
            <person name="Kiss H."/>
            <person name="Brettin T."/>
            <person name="Detter J.C."/>
            <person name="Han C."/>
            <person name="Kuske C.R."/>
            <person name="Schmutz J."/>
            <person name="Larimer F."/>
            <person name="Land M."/>
            <person name="Hauser L."/>
            <person name="Kyrpides N."/>
            <person name="Mikhailova N."/>
            <person name="Marx C.J."/>
            <person name="Richardson P."/>
        </authorList>
    </citation>
    <scope>NUCLEOTIDE SEQUENCE [LARGE SCALE GENOMIC DNA]</scope>
    <source>
        <strain>ATCC 27329 / DSM 1819 / JCM 2831 / NBRC 15690 / NCIMB 10815 / 0-1</strain>
    </source>
</reference>
<dbReference type="EMBL" id="CP001001">
    <property type="protein sequence ID" value="ACB24307.1"/>
    <property type="molecule type" value="Genomic_DNA"/>
</dbReference>
<dbReference type="RefSeq" id="WP_012319280.1">
    <property type="nucleotide sequence ID" value="NC_010505.1"/>
</dbReference>
<dbReference type="SMR" id="B1LXV0"/>
<dbReference type="STRING" id="426355.Mrad2831_2312"/>
<dbReference type="GeneID" id="6138344"/>
<dbReference type="KEGG" id="mrd:Mrad2831_2312"/>
<dbReference type="eggNOG" id="COG2967">
    <property type="taxonomic scope" value="Bacteria"/>
</dbReference>
<dbReference type="HOGENOM" id="CLU_128074_1_0_5"/>
<dbReference type="OrthoDB" id="9795226at2"/>
<dbReference type="Proteomes" id="UP000006589">
    <property type="component" value="Chromosome"/>
</dbReference>
<dbReference type="GO" id="GO:0070987">
    <property type="term" value="P:error-free translesion synthesis"/>
    <property type="evidence" value="ECO:0007669"/>
    <property type="project" value="TreeGrafter"/>
</dbReference>
<dbReference type="Gene3D" id="2.60.40.1470">
    <property type="entry name" value="ApaG domain"/>
    <property type="match status" value="1"/>
</dbReference>
<dbReference type="HAMAP" id="MF_00791">
    <property type="entry name" value="ApaG"/>
    <property type="match status" value="1"/>
</dbReference>
<dbReference type="InterPro" id="IPR007474">
    <property type="entry name" value="ApaG_domain"/>
</dbReference>
<dbReference type="InterPro" id="IPR036767">
    <property type="entry name" value="ApaG_sf"/>
</dbReference>
<dbReference type="InterPro" id="IPR023065">
    <property type="entry name" value="Uncharacterised_ApaG"/>
</dbReference>
<dbReference type="NCBIfam" id="NF003967">
    <property type="entry name" value="PRK05461.1"/>
    <property type="match status" value="1"/>
</dbReference>
<dbReference type="PANTHER" id="PTHR14289">
    <property type="entry name" value="F-BOX ONLY PROTEIN 3"/>
    <property type="match status" value="1"/>
</dbReference>
<dbReference type="PANTHER" id="PTHR14289:SF16">
    <property type="entry name" value="POLYMERASE DELTA-INTERACTING PROTEIN 2"/>
    <property type="match status" value="1"/>
</dbReference>
<dbReference type="Pfam" id="PF04379">
    <property type="entry name" value="DUF525"/>
    <property type="match status" value="1"/>
</dbReference>
<dbReference type="SUPFAM" id="SSF110069">
    <property type="entry name" value="ApaG-like"/>
    <property type="match status" value="1"/>
</dbReference>
<dbReference type="PROSITE" id="PS51087">
    <property type="entry name" value="APAG"/>
    <property type="match status" value="1"/>
</dbReference>
<protein>
    <recommendedName>
        <fullName evidence="1">Protein ApaG</fullName>
    </recommendedName>
</protein>
<proteinExistence type="inferred from homology"/>
<evidence type="ECO:0000255" key="1">
    <source>
        <dbReference type="HAMAP-Rule" id="MF_00791"/>
    </source>
</evidence>
<name>APAG_METRJ</name>
<feature type="chain" id="PRO_1000133797" description="Protein ApaG">
    <location>
        <begin position="1"/>
        <end position="130"/>
    </location>
</feature>
<feature type="domain" description="ApaG" evidence="1">
    <location>
        <begin position="3"/>
        <end position="127"/>
    </location>
</feature>
<accession>B1LXV0</accession>